<protein>
    <recommendedName>
        <fullName evidence="1">3-dehydroquinate dehydratase</fullName>
        <shortName evidence="1">3-dehydroquinase</shortName>
        <ecNumber evidence="1">4.2.1.10</ecNumber>
    </recommendedName>
    <alternativeName>
        <fullName evidence="1">Type II DHQase</fullName>
    </alternativeName>
</protein>
<keyword id="KW-0028">Amino-acid biosynthesis</keyword>
<keyword id="KW-0057">Aromatic amino acid biosynthesis</keyword>
<keyword id="KW-0456">Lyase</keyword>
<evidence type="ECO:0000255" key="1">
    <source>
        <dbReference type="HAMAP-Rule" id="MF_00169"/>
    </source>
</evidence>
<accession>Q6N726</accession>
<proteinExistence type="inferred from homology"/>
<dbReference type="EC" id="4.2.1.10" evidence="1"/>
<dbReference type="EMBL" id="BX572600">
    <property type="protein sequence ID" value="CAE27878.1"/>
    <property type="molecule type" value="Genomic_DNA"/>
</dbReference>
<dbReference type="RefSeq" id="WP_011157987.1">
    <property type="nucleotide sequence ID" value="NZ_CP116810.1"/>
</dbReference>
<dbReference type="SMR" id="Q6N726"/>
<dbReference type="STRING" id="258594.RPA2437"/>
<dbReference type="GeneID" id="66893500"/>
<dbReference type="eggNOG" id="COG0757">
    <property type="taxonomic scope" value="Bacteria"/>
</dbReference>
<dbReference type="HOGENOM" id="CLU_090968_2_0_5"/>
<dbReference type="PhylomeDB" id="Q6N726"/>
<dbReference type="UniPathway" id="UPA00053">
    <property type="reaction ID" value="UER00086"/>
</dbReference>
<dbReference type="GO" id="GO:0003855">
    <property type="term" value="F:3-dehydroquinate dehydratase activity"/>
    <property type="evidence" value="ECO:0007669"/>
    <property type="project" value="UniProtKB-UniRule"/>
</dbReference>
<dbReference type="GO" id="GO:0008652">
    <property type="term" value="P:amino acid biosynthetic process"/>
    <property type="evidence" value="ECO:0007669"/>
    <property type="project" value="UniProtKB-KW"/>
</dbReference>
<dbReference type="GO" id="GO:0009073">
    <property type="term" value="P:aromatic amino acid family biosynthetic process"/>
    <property type="evidence" value="ECO:0007669"/>
    <property type="project" value="UniProtKB-KW"/>
</dbReference>
<dbReference type="GO" id="GO:0009423">
    <property type="term" value="P:chorismate biosynthetic process"/>
    <property type="evidence" value="ECO:0007669"/>
    <property type="project" value="UniProtKB-UniRule"/>
</dbReference>
<dbReference type="GO" id="GO:0019631">
    <property type="term" value="P:quinate catabolic process"/>
    <property type="evidence" value="ECO:0007669"/>
    <property type="project" value="TreeGrafter"/>
</dbReference>
<dbReference type="CDD" id="cd00466">
    <property type="entry name" value="DHQase_II"/>
    <property type="match status" value="1"/>
</dbReference>
<dbReference type="Gene3D" id="3.40.50.9100">
    <property type="entry name" value="Dehydroquinase, class II"/>
    <property type="match status" value="1"/>
</dbReference>
<dbReference type="HAMAP" id="MF_00169">
    <property type="entry name" value="AroQ"/>
    <property type="match status" value="1"/>
</dbReference>
<dbReference type="InterPro" id="IPR001874">
    <property type="entry name" value="DHquinase_II"/>
</dbReference>
<dbReference type="InterPro" id="IPR018509">
    <property type="entry name" value="DHquinase_II_CS"/>
</dbReference>
<dbReference type="InterPro" id="IPR036441">
    <property type="entry name" value="DHquinase_II_sf"/>
</dbReference>
<dbReference type="NCBIfam" id="TIGR01088">
    <property type="entry name" value="aroQ"/>
    <property type="match status" value="1"/>
</dbReference>
<dbReference type="NCBIfam" id="NF003805">
    <property type="entry name" value="PRK05395.1-2"/>
    <property type="match status" value="1"/>
</dbReference>
<dbReference type="NCBIfam" id="NF003806">
    <property type="entry name" value="PRK05395.1-3"/>
    <property type="match status" value="1"/>
</dbReference>
<dbReference type="NCBIfam" id="NF003807">
    <property type="entry name" value="PRK05395.1-4"/>
    <property type="match status" value="1"/>
</dbReference>
<dbReference type="PANTHER" id="PTHR21272">
    <property type="entry name" value="CATABOLIC 3-DEHYDROQUINASE"/>
    <property type="match status" value="1"/>
</dbReference>
<dbReference type="PANTHER" id="PTHR21272:SF3">
    <property type="entry name" value="CATABOLIC 3-DEHYDROQUINASE"/>
    <property type="match status" value="1"/>
</dbReference>
<dbReference type="Pfam" id="PF01220">
    <property type="entry name" value="DHquinase_II"/>
    <property type="match status" value="1"/>
</dbReference>
<dbReference type="PIRSF" id="PIRSF001399">
    <property type="entry name" value="DHquinase_II"/>
    <property type="match status" value="1"/>
</dbReference>
<dbReference type="SUPFAM" id="SSF52304">
    <property type="entry name" value="Type II 3-dehydroquinate dehydratase"/>
    <property type="match status" value="1"/>
</dbReference>
<dbReference type="PROSITE" id="PS01029">
    <property type="entry name" value="DEHYDROQUINASE_II"/>
    <property type="match status" value="1"/>
</dbReference>
<sequence length="151" mass="16014">MAQTIYVLNGPNLNLLGTREPEIYGRATLADVEKLCAETAAGFGLIAVCRQSNHEGQLIDWIHQARSEKVAGLVINAGGYTHTSIALHDALVGVQIPTVEVHVSNVFAREDFRHHSFIAKAAFASLCGFGIDGYRLAITGLAAKLGASATA</sequence>
<name>AROQ_RHOPA</name>
<reference key="1">
    <citation type="journal article" date="2004" name="Nat. Biotechnol.">
        <title>Complete genome sequence of the metabolically versatile photosynthetic bacterium Rhodopseudomonas palustris.</title>
        <authorList>
            <person name="Larimer F.W."/>
            <person name="Chain P."/>
            <person name="Hauser L."/>
            <person name="Lamerdin J.E."/>
            <person name="Malfatti S."/>
            <person name="Do L."/>
            <person name="Land M.L."/>
            <person name="Pelletier D.A."/>
            <person name="Beatty J.T."/>
            <person name="Lang A.S."/>
            <person name="Tabita F.R."/>
            <person name="Gibson J.L."/>
            <person name="Hanson T.E."/>
            <person name="Bobst C."/>
            <person name="Torres y Torres J.L."/>
            <person name="Peres C."/>
            <person name="Harrison F.H."/>
            <person name="Gibson J."/>
            <person name="Harwood C.S."/>
        </authorList>
    </citation>
    <scope>NUCLEOTIDE SEQUENCE [LARGE SCALE GENOMIC DNA]</scope>
    <source>
        <strain>ATCC BAA-98 / CGA009</strain>
    </source>
</reference>
<organism>
    <name type="scientific">Rhodopseudomonas palustris (strain ATCC BAA-98 / CGA009)</name>
    <dbReference type="NCBI Taxonomy" id="258594"/>
    <lineage>
        <taxon>Bacteria</taxon>
        <taxon>Pseudomonadati</taxon>
        <taxon>Pseudomonadota</taxon>
        <taxon>Alphaproteobacteria</taxon>
        <taxon>Hyphomicrobiales</taxon>
        <taxon>Nitrobacteraceae</taxon>
        <taxon>Rhodopseudomonas</taxon>
    </lineage>
</organism>
<comment type="function">
    <text evidence="1">Catalyzes a trans-dehydration via an enolate intermediate.</text>
</comment>
<comment type="catalytic activity">
    <reaction evidence="1">
        <text>3-dehydroquinate = 3-dehydroshikimate + H2O</text>
        <dbReference type="Rhea" id="RHEA:21096"/>
        <dbReference type="ChEBI" id="CHEBI:15377"/>
        <dbReference type="ChEBI" id="CHEBI:16630"/>
        <dbReference type="ChEBI" id="CHEBI:32364"/>
        <dbReference type="EC" id="4.2.1.10"/>
    </reaction>
</comment>
<comment type="pathway">
    <text evidence="1">Metabolic intermediate biosynthesis; chorismate biosynthesis; chorismate from D-erythrose 4-phosphate and phosphoenolpyruvate: step 3/7.</text>
</comment>
<comment type="subunit">
    <text evidence="1">Homododecamer.</text>
</comment>
<comment type="similarity">
    <text evidence="1">Belongs to the type-II 3-dehydroquinase family.</text>
</comment>
<gene>
    <name evidence="1" type="primary">aroQ</name>
    <name type="ordered locus">RPA2437</name>
</gene>
<feature type="chain" id="PRO_0000159927" description="3-dehydroquinate dehydratase">
    <location>
        <begin position="1"/>
        <end position="151"/>
    </location>
</feature>
<feature type="active site" description="Proton acceptor" evidence="1">
    <location>
        <position position="24"/>
    </location>
</feature>
<feature type="active site" description="Proton donor" evidence="1">
    <location>
        <position position="102"/>
    </location>
</feature>
<feature type="binding site" evidence="1">
    <location>
        <position position="76"/>
    </location>
    <ligand>
        <name>substrate</name>
    </ligand>
</feature>
<feature type="binding site" evidence="1">
    <location>
        <position position="82"/>
    </location>
    <ligand>
        <name>substrate</name>
    </ligand>
</feature>
<feature type="binding site" evidence="1">
    <location>
        <position position="89"/>
    </location>
    <ligand>
        <name>substrate</name>
    </ligand>
</feature>
<feature type="binding site" evidence="1">
    <location>
        <begin position="103"/>
        <end position="104"/>
    </location>
    <ligand>
        <name>substrate</name>
    </ligand>
</feature>
<feature type="binding site" evidence="1">
    <location>
        <position position="113"/>
    </location>
    <ligand>
        <name>substrate</name>
    </ligand>
</feature>
<feature type="site" description="Transition state stabilizer" evidence="1">
    <location>
        <position position="19"/>
    </location>
</feature>